<feature type="chain" id="PRO_0000390610" description="Prokaryotic ubiquitin-like protein Pup 2">
    <location>
        <begin position="1"/>
        <end position="62"/>
    </location>
</feature>
<feature type="region of interest" description="Disordered" evidence="2">
    <location>
        <begin position="1"/>
        <end position="34"/>
    </location>
</feature>
<feature type="region of interest" description="ARC ATPase binding" evidence="1">
    <location>
        <begin position="21"/>
        <end position="56"/>
    </location>
</feature>
<feature type="cross-link" description="Isoglutamyl lysine isopeptide (Glu-Lys) (interchain with K-? in acceptor proteins)" evidence="1">
    <location>
        <position position="62"/>
    </location>
</feature>
<dbReference type="EMBL" id="AM420293">
    <property type="protein sequence ID" value="CAM01760.1"/>
    <property type="molecule type" value="Genomic_DNA"/>
</dbReference>
<dbReference type="RefSeq" id="WP_009947282.1">
    <property type="nucleotide sequence ID" value="NC_009142.1"/>
</dbReference>
<dbReference type="SMR" id="A4FCI5"/>
<dbReference type="STRING" id="405948.SACE_2462"/>
<dbReference type="KEGG" id="sen:SACE_2462"/>
<dbReference type="HOGENOM" id="CLU_183816_1_0_11"/>
<dbReference type="OrthoDB" id="3254977at2"/>
<dbReference type="UniPathway" id="UPA00997"/>
<dbReference type="Proteomes" id="UP000006728">
    <property type="component" value="Chromosome"/>
</dbReference>
<dbReference type="GO" id="GO:0070628">
    <property type="term" value="F:proteasome binding"/>
    <property type="evidence" value="ECO:0007669"/>
    <property type="project" value="UniProtKB-UniRule"/>
</dbReference>
<dbReference type="GO" id="GO:0031386">
    <property type="term" value="F:protein tag activity"/>
    <property type="evidence" value="ECO:0007669"/>
    <property type="project" value="UniProtKB-UniRule"/>
</dbReference>
<dbReference type="GO" id="GO:0019941">
    <property type="term" value="P:modification-dependent protein catabolic process"/>
    <property type="evidence" value="ECO:0007669"/>
    <property type="project" value="UniProtKB-UniRule"/>
</dbReference>
<dbReference type="GO" id="GO:0010498">
    <property type="term" value="P:proteasomal protein catabolic process"/>
    <property type="evidence" value="ECO:0007669"/>
    <property type="project" value="UniProtKB-UniRule"/>
</dbReference>
<dbReference type="GO" id="GO:0070490">
    <property type="term" value="P:protein pupylation"/>
    <property type="evidence" value="ECO:0007669"/>
    <property type="project" value="UniProtKB-UniRule"/>
</dbReference>
<dbReference type="HAMAP" id="MF_02106">
    <property type="entry name" value="Pup"/>
    <property type="match status" value="1"/>
</dbReference>
<dbReference type="InterPro" id="IPR008515">
    <property type="entry name" value="Ubiquitin-like_Pup"/>
</dbReference>
<dbReference type="NCBIfam" id="TIGR03687">
    <property type="entry name" value="pupylate_cterm"/>
    <property type="match status" value="1"/>
</dbReference>
<dbReference type="Pfam" id="PF05639">
    <property type="entry name" value="Pup"/>
    <property type="match status" value="1"/>
</dbReference>
<comment type="function">
    <text evidence="1">Protein modifier that is covalently attached to lysine residues of substrate proteins, thereby targeting them for proteasomal degradation. The tagging system is termed pupylation.</text>
</comment>
<comment type="pathway">
    <text evidence="1">Protein degradation; proteasomal Pup-dependent pathway.</text>
</comment>
<comment type="subunit">
    <text evidence="1">Strongly interacts with the proteasome-associated ATPase ARC through a hydrophobic interface; the interacting region of Pup lies in its C-terminal half. There is one Pup binding site per ARC hexamer ring.</text>
</comment>
<comment type="domain">
    <text evidence="1">The N-terminal unstructured half of Pup provides a signal required to initiate unfolding and degradation by the proteasome but is not needed for pupylation, while the C-terminal helical half of Pup interacts with ARC to target proteins to the proteasome.</text>
</comment>
<comment type="similarity">
    <text evidence="1">Belongs to the prokaryotic ubiquitin-like protein family.</text>
</comment>
<sequence length="62" mass="6966">MRQEKPKRHGREDDEPPEPAPAGRARDTTVGDDTDELLDEIDGVLEENAVEFVRSYIQKGGE</sequence>
<gene>
    <name evidence="1" type="primary">pup2</name>
    <name type="ordered locus">SACE_2462</name>
</gene>
<evidence type="ECO:0000255" key="1">
    <source>
        <dbReference type="HAMAP-Rule" id="MF_02106"/>
    </source>
</evidence>
<evidence type="ECO:0000256" key="2">
    <source>
        <dbReference type="SAM" id="MobiDB-lite"/>
    </source>
</evidence>
<protein>
    <recommendedName>
        <fullName evidence="1">Prokaryotic ubiquitin-like protein Pup 2</fullName>
    </recommendedName>
    <alternativeName>
        <fullName evidence="1">Bacterial ubiquitin-like modifier 2</fullName>
    </alternativeName>
</protein>
<accession>A4FCI5</accession>
<organism>
    <name type="scientific">Saccharopolyspora erythraea (strain ATCC 11635 / DSM 40517 / JCM 4748 / NBRC 13426 / NCIMB 8594 / NRRL 2338)</name>
    <dbReference type="NCBI Taxonomy" id="405948"/>
    <lineage>
        <taxon>Bacteria</taxon>
        <taxon>Bacillati</taxon>
        <taxon>Actinomycetota</taxon>
        <taxon>Actinomycetes</taxon>
        <taxon>Pseudonocardiales</taxon>
        <taxon>Pseudonocardiaceae</taxon>
        <taxon>Saccharopolyspora</taxon>
    </lineage>
</organism>
<keyword id="KW-1017">Isopeptide bond</keyword>
<keyword id="KW-1185">Reference proteome</keyword>
<keyword id="KW-0833">Ubl conjugation pathway</keyword>
<proteinExistence type="inferred from homology"/>
<name>PUP2_SACEN</name>
<reference key="1">
    <citation type="journal article" date="2007" name="Nat. Biotechnol.">
        <title>Complete genome sequence of the erythromycin-producing bacterium Saccharopolyspora erythraea NRRL23338.</title>
        <authorList>
            <person name="Oliynyk M."/>
            <person name="Samborskyy M."/>
            <person name="Lester J.B."/>
            <person name="Mironenko T."/>
            <person name="Scott N."/>
            <person name="Dickens S."/>
            <person name="Haydock S.F."/>
            <person name="Leadlay P.F."/>
        </authorList>
    </citation>
    <scope>NUCLEOTIDE SEQUENCE [LARGE SCALE GENOMIC DNA]</scope>
    <source>
        <strain>ATCC 11635 / DSM 40517 / JCM 4748 / NBRC 13426 / NCIMB 8594 / NRRL 2338</strain>
    </source>
</reference>